<accession>P46971</accession>
<accession>D6VWW2</accession>
<proteinExistence type="evidence at protein level"/>
<name>PMT4_YEAST</name>
<comment type="function">
    <text evidence="5 8 10 11">Protein O-mannosyltransferase involved in O-glycosylation which is essential for cell wall rigidity. Forms a homodimeric complex to transfer mannose from Dol-P-mannose to Ser or Thr residues on proteins. Specifically acts on secretory proteins with an ER-luminally oriented Ser/Thr-rich region flanked by a membrane anchor such as FUS1, AXL2, GAS1, KEX2, MID2, WSC1, WSC2, OPY2, PRM5, RAX2, or YNL176.</text>
</comment>
<comment type="catalytic activity">
    <reaction evidence="10">
        <text>a di-trans,poly-cis-dolichyl beta-D-mannosyl phosphate + L-seryl-[protein] = 3-O-(alpha-D-mannosyl)-L-seryl-[protein] + a di-trans,poly-cis-dolichyl phosphate + H(+)</text>
        <dbReference type="Rhea" id="RHEA:17377"/>
        <dbReference type="Rhea" id="RHEA-COMP:9863"/>
        <dbReference type="Rhea" id="RHEA-COMP:13546"/>
        <dbReference type="Rhea" id="RHEA-COMP:19498"/>
        <dbReference type="Rhea" id="RHEA-COMP:19501"/>
        <dbReference type="ChEBI" id="CHEBI:15378"/>
        <dbReference type="ChEBI" id="CHEBI:29999"/>
        <dbReference type="ChEBI" id="CHEBI:57683"/>
        <dbReference type="ChEBI" id="CHEBI:58211"/>
        <dbReference type="ChEBI" id="CHEBI:137321"/>
        <dbReference type="EC" id="2.4.1.109"/>
    </reaction>
</comment>
<comment type="catalytic activity">
    <reaction evidence="10">
        <text>a di-trans,poly-cis-dolichyl beta-D-mannosyl phosphate + L-threonyl-[protein] = 3-O-(alpha-D-mannosyl)-L-threonyl-[protein] + a di-trans,poly-cis-dolichyl phosphate + H(+)</text>
        <dbReference type="Rhea" id="RHEA:53396"/>
        <dbReference type="Rhea" id="RHEA-COMP:11060"/>
        <dbReference type="Rhea" id="RHEA-COMP:13547"/>
        <dbReference type="Rhea" id="RHEA-COMP:19498"/>
        <dbReference type="Rhea" id="RHEA-COMP:19501"/>
        <dbReference type="ChEBI" id="CHEBI:15378"/>
        <dbReference type="ChEBI" id="CHEBI:30013"/>
        <dbReference type="ChEBI" id="CHEBI:57683"/>
        <dbReference type="ChEBI" id="CHEBI:58211"/>
        <dbReference type="ChEBI" id="CHEBI:137323"/>
        <dbReference type="EC" id="2.4.1.109"/>
    </reaction>
</comment>
<comment type="pathway">
    <text evidence="14">Protein modification; protein glycosylation.</text>
</comment>
<comment type="subunit">
    <text evidence="6 9 13">Forms a functional homodimer and may form a heterodimer with PMT6. Interacts with RCR1.</text>
</comment>
<comment type="interaction">
    <interactant intactId="EBI-13585">
        <id>P46971</id>
    </interactant>
    <interactant intactId="EBI-13585">
        <id>P46971</id>
        <label>PMT4</label>
    </interactant>
    <organismsDiffer>false</organismsDiffer>
    <experiments>2</experiments>
</comment>
<comment type="subcellular location">
    <subcellularLocation>
        <location evidence="1">Endoplasmic reticulum membrane</location>
        <topology evidence="2">Multi-pass membrane protein</topology>
    </subcellularLocation>
</comment>
<comment type="disruption phenotype">
    <text evidence="8">Leads to diminished MID2 O-mannosylation.</text>
</comment>
<comment type="miscellaneous">
    <text evidence="7">Present with 1270 molecules/cell in log phase SD medium.</text>
</comment>
<comment type="similarity">
    <text evidence="14">Belongs to the glycosyltransferase 39 family.</text>
</comment>
<dbReference type="EC" id="2.4.1.109" evidence="10"/>
<dbReference type="EMBL" id="X83798">
    <property type="protein sequence ID" value="CAA58729.1"/>
    <property type="molecule type" value="Genomic_DNA"/>
</dbReference>
<dbReference type="EMBL" id="Z49643">
    <property type="protein sequence ID" value="CAA89676.1"/>
    <property type="molecule type" value="Genomic_DNA"/>
</dbReference>
<dbReference type="EMBL" id="BK006943">
    <property type="protein sequence ID" value="DAA08928.1"/>
    <property type="molecule type" value="Genomic_DNA"/>
</dbReference>
<dbReference type="PIR" id="S60415">
    <property type="entry name" value="S60415"/>
</dbReference>
<dbReference type="RefSeq" id="NP_012677.1">
    <property type="nucleotide sequence ID" value="NM_001181801.1"/>
</dbReference>
<dbReference type="SMR" id="P46971"/>
<dbReference type="BioGRID" id="33899">
    <property type="interactions" value="175"/>
</dbReference>
<dbReference type="ComplexPortal" id="CPX-3039">
    <property type="entry name" value="PMT4 dolichyl-phosphate-mannose-protein mannosyltransferase complex"/>
</dbReference>
<dbReference type="DIP" id="DIP-2549N"/>
<dbReference type="FunCoup" id="P46971">
    <property type="interactions" value="647"/>
</dbReference>
<dbReference type="IntAct" id="P46971">
    <property type="interactions" value="34"/>
</dbReference>
<dbReference type="MINT" id="P46971"/>
<dbReference type="STRING" id="4932.YJR143C"/>
<dbReference type="CAZy" id="GT39">
    <property type="family name" value="Glycosyltransferase Family 39"/>
</dbReference>
<dbReference type="GlyCosmos" id="P46971">
    <property type="glycosylation" value="1 site, No reported glycans"/>
</dbReference>
<dbReference type="GlyGen" id="P46971">
    <property type="glycosylation" value="1 site"/>
</dbReference>
<dbReference type="iPTMnet" id="P46971"/>
<dbReference type="PaxDb" id="4932-YJR143C"/>
<dbReference type="PeptideAtlas" id="P46971"/>
<dbReference type="EnsemblFungi" id="YJR143C_mRNA">
    <property type="protein sequence ID" value="YJR143C"/>
    <property type="gene ID" value="YJR143C"/>
</dbReference>
<dbReference type="GeneID" id="853608"/>
<dbReference type="KEGG" id="sce:YJR143C"/>
<dbReference type="AGR" id="SGD:S000003904"/>
<dbReference type="SGD" id="S000003904">
    <property type="gene designation" value="PMT4"/>
</dbReference>
<dbReference type="VEuPathDB" id="FungiDB:YJR143C"/>
<dbReference type="eggNOG" id="KOG3359">
    <property type="taxonomic scope" value="Eukaryota"/>
</dbReference>
<dbReference type="GeneTree" id="ENSGT00940000158049"/>
<dbReference type="HOGENOM" id="CLU_008438_0_0_1"/>
<dbReference type="InParanoid" id="P46971"/>
<dbReference type="OMA" id="NCHLNAP"/>
<dbReference type="OrthoDB" id="292747at2759"/>
<dbReference type="BioCyc" id="YEAST:YJR143C-MONOMER"/>
<dbReference type="BRENDA" id="2.4.1.109">
    <property type="organism ID" value="984"/>
</dbReference>
<dbReference type="UniPathway" id="UPA00378"/>
<dbReference type="BioGRID-ORCS" id="853608">
    <property type="hits" value="1 hit in 10 CRISPR screens"/>
</dbReference>
<dbReference type="PRO" id="PR:P46971"/>
<dbReference type="Proteomes" id="UP000002311">
    <property type="component" value="Chromosome X"/>
</dbReference>
<dbReference type="RNAct" id="P46971">
    <property type="molecule type" value="protein"/>
</dbReference>
<dbReference type="GO" id="GO:0097586">
    <property type="term" value="C:dolichyl-phosphate-mannose-protein mannosyltransferase Pmt4p homodimer complex"/>
    <property type="evidence" value="ECO:0000353"/>
    <property type="project" value="ComplexPortal"/>
</dbReference>
<dbReference type="GO" id="GO:0005783">
    <property type="term" value="C:endoplasmic reticulum"/>
    <property type="evidence" value="ECO:0007005"/>
    <property type="project" value="SGD"/>
</dbReference>
<dbReference type="GO" id="GO:0005789">
    <property type="term" value="C:endoplasmic reticulum membrane"/>
    <property type="evidence" value="ECO:0000314"/>
    <property type="project" value="ComplexPortal"/>
</dbReference>
<dbReference type="GO" id="GO:0004169">
    <property type="term" value="F:dolichyl-phosphate-mannose-protein mannosyltransferase activity"/>
    <property type="evidence" value="ECO:0000314"/>
    <property type="project" value="SGD"/>
</dbReference>
<dbReference type="GO" id="GO:0042802">
    <property type="term" value="F:identical protein binding"/>
    <property type="evidence" value="ECO:0000353"/>
    <property type="project" value="IntAct"/>
</dbReference>
<dbReference type="GO" id="GO:0009272">
    <property type="term" value="P:fungal-type cell wall biogenesis"/>
    <property type="evidence" value="ECO:0000250"/>
    <property type="project" value="ComplexPortal"/>
</dbReference>
<dbReference type="GO" id="GO:0006493">
    <property type="term" value="P:protein O-linked glycosylation"/>
    <property type="evidence" value="ECO:0000315"/>
    <property type="project" value="SGD"/>
</dbReference>
<dbReference type="GO" id="GO:0035269">
    <property type="term" value="P:protein O-linked mannosylation"/>
    <property type="evidence" value="ECO:0000314"/>
    <property type="project" value="ComplexPortal"/>
</dbReference>
<dbReference type="GO" id="GO:1900101">
    <property type="term" value="P:regulation of endoplasmic reticulum unfolded protein response"/>
    <property type="evidence" value="ECO:0000316"/>
    <property type="project" value="SGD"/>
</dbReference>
<dbReference type="CDD" id="cd23285">
    <property type="entry name" value="beta-trefoil_MIR_PMT4-like"/>
    <property type="match status" value="1"/>
</dbReference>
<dbReference type="FunFam" id="2.80.10.50:FF:000044">
    <property type="entry name" value="Dolichyl-phosphate-mannose-protein mannosyltransferase 4"/>
    <property type="match status" value="1"/>
</dbReference>
<dbReference type="Gene3D" id="2.80.10.50">
    <property type="match status" value="1"/>
</dbReference>
<dbReference type="InterPro" id="IPR027005">
    <property type="entry name" value="GlyclTrfase_39-like"/>
</dbReference>
<dbReference type="InterPro" id="IPR003342">
    <property type="entry name" value="Glyco_trans_39/83"/>
</dbReference>
<dbReference type="InterPro" id="IPR036300">
    <property type="entry name" value="MIR_dom_sf"/>
</dbReference>
<dbReference type="InterPro" id="IPR016093">
    <property type="entry name" value="MIR_motif"/>
</dbReference>
<dbReference type="InterPro" id="IPR032421">
    <property type="entry name" value="PMT_4TMC"/>
</dbReference>
<dbReference type="PANTHER" id="PTHR10050">
    <property type="entry name" value="DOLICHYL-PHOSPHATE-MANNOSE--PROTEIN MANNOSYLTRANSFERASE"/>
    <property type="match status" value="1"/>
</dbReference>
<dbReference type="PANTHER" id="PTHR10050:SF51">
    <property type="entry name" value="PROTEIN O-MANNOSYL-TRANSFERASE 1"/>
    <property type="match status" value="1"/>
</dbReference>
<dbReference type="Pfam" id="PF02815">
    <property type="entry name" value="MIR"/>
    <property type="match status" value="1"/>
</dbReference>
<dbReference type="Pfam" id="PF02366">
    <property type="entry name" value="PMT"/>
    <property type="match status" value="1"/>
</dbReference>
<dbReference type="Pfam" id="PF16192">
    <property type="entry name" value="PMT_4TMC"/>
    <property type="match status" value="1"/>
</dbReference>
<dbReference type="SMART" id="SM00472">
    <property type="entry name" value="MIR"/>
    <property type="match status" value="3"/>
</dbReference>
<dbReference type="SUPFAM" id="SSF82109">
    <property type="entry name" value="MIR domain"/>
    <property type="match status" value="1"/>
</dbReference>
<dbReference type="PROSITE" id="PS50919">
    <property type="entry name" value="MIR"/>
    <property type="match status" value="3"/>
</dbReference>
<gene>
    <name evidence="12" type="primary">PMT4</name>
    <name evidence="15" type="ordered locus">YJR143C</name>
    <name type="ORF">J2176</name>
</gene>
<reference key="1">
    <citation type="journal article" date="1995" name="Yeast">
        <title>PMT3 and PMT4, two new members of the protein-O-mannosyltransferase gene family of Saccharomyces cerevisiae.</title>
        <authorList>
            <person name="Immervoll T."/>
            <person name="Gentzsch M."/>
            <person name="Tanner W."/>
        </authorList>
    </citation>
    <scope>NUCLEOTIDE SEQUENCE [GENOMIC DNA]</scope>
</reference>
<reference key="2">
    <citation type="journal article" date="1996" name="EMBO J.">
        <title>Complete nucleotide sequence of Saccharomyces cerevisiae chromosome X.</title>
        <authorList>
            <person name="Galibert F."/>
            <person name="Alexandraki D."/>
            <person name="Baur A."/>
            <person name="Boles E."/>
            <person name="Chalwatzis N."/>
            <person name="Chuat J.-C."/>
            <person name="Coster F."/>
            <person name="Cziepluch C."/>
            <person name="de Haan M."/>
            <person name="Domdey H."/>
            <person name="Durand P."/>
            <person name="Entian K.-D."/>
            <person name="Gatius M."/>
            <person name="Goffeau A."/>
            <person name="Grivell L.A."/>
            <person name="Hennemann A."/>
            <person name="Herbert C.J."/>
            <person name="Heumann K."/>
            <person name="Hilger F."/>
            <person name="Hollenberg C.P."/>
            <person name="Huang M.-E."/>
            <person name="Jacq C."/>
            <person name="Jauniaux J.-C."/>
            <person name="Katsoulou C."/>
            <person name="Kirchrath L."/>
            <person name="Kleine K."/>
            <person name="Kordes E."/>
            <person name="Koetter P."/>
            <person name="Liebl S."/>
            <person name="Louis E.J."/>
            <person name="Manus V."/>
            <person name="Mewes H.-W."/>
            <person name="Miosga T."/>
            <person name="Obermaier B."/>
            <person name="Perea J."/>
            <person name="Pohl T.M."/>
            <person name="Portetelle D."/>
            <person name="Pujol A."/>
            <person name="Purnelle B."/>
            <person name="Ramezani Rad M."/>
            <person name="Rasmussen S.W."/>
            <person name="Rose M."/>
            <person name="Rossau R."/>
            <person name="Schaaff-Gerstenschlaeger I."/>
            <person name="Smits P.H.M."/>
            <person name="Scarcez T."/>
            <person name="Soriano N."/>
            <person name="To Van D."/>
            <person name="Tzermia M."/>
            <person name="Van Broekhoven A."/>
            <person name="Vandenbol M."/>
            <person name="Wedler H."/>
            <person name="von Wettstein D."/>
            <person name="Wambutt R."/>
            <person name="Zagulski M."/>
            <person name="Zollner A."/>
            <person name="Karpfinger-Hartl L."/>
        </authorList>
    </citation>
    <scope>NUCLEOTIDE SEQUENCE [LARGE SCALE GENOMIC DNA]</scope>
    <source>
        <strain>ATCC 204508 / S288c</strain>
    </source>
</reference>
<reference key="3">
    <citation type="journal article" date="2014" name="G3 (Bethesda)">
        <title>The reference genome sequence of Saccharomyces cerevisiae: Then and now.</title>
        <authorList>
            <person name="Engel S.R."/>
            <person name="Dietrich F.S."/>
            <person name="Fisk D.G."/>
            <person name="Binkley G."/>
            <person name="Balakrishnan R."/>
            <person name="Costanzo M.C."/>
            <person name="Dwight S.S."/>
            <person name="Hitz B.C."/>
            <person name="Karra K."/>
            <person name="Nash R.S."/>
            <person name="Weng S."/>
            <person name="Wong E.D."/>
            <person name="Lloyd P."/>
            <person name="Skrzypek M.S."/>
            <person name="Miyasato S.R."/>
            <person name="Simison M."/>
            <person name="Cherry J.M."/>
        </authorList>
    </citation>
    <scope>GENOME REANNOTATION</scope>
    <source>
        <strain>ATCC 204508 / S288c</strain>
    </source>
</reference>
<reference key="4">
    <citation type="journal article" date="1996" name="EMBO J.">
        <title>The PMT gene family: protein O-glycosylation in Saccharomyces cerevisiae is vital.</title>
        <authorList>
            <person name="Gaentzsch M."/>
            <person name="Tanner W."/>
        </authorList>
    </citation>
    <scope>CHARACTERIZATION</scope>
</reference>
<reference key="5">
    <citation type="journal article" date="1997" name="Glycobiology">
        <title>Protein-O-glycosylation in yeast: protein-specific mannosyltransferases.</title>
        <authorList>
            <person name="Gentzsch M."/>
            <person name="Tanner W."/>
        </authorList>
    </citation>
    <scope>FUNCTION</scope>
    <scope>SUBUNIT</scope>
</reference>
<reference key="6">
    <citation type="journal article" date="1999" name="J. Cell Biol.">
        <title>O-glycosylation of Axl2/Bud10p by Pmt4p is required for its stability, localization, and function in daughter cells.</title>
        <authorList>
            <person name="Sanders S.L."/>
            <person name="Gentzsch M."/>
            <person name="Tanner W."/>
            <person name="Herskowitz I."/>
        </authorList>
    </citation>
    <scope>FUNCTION</scope>
</reference>
<reference key="7">
    <citation type="journal article" date="2003" name="J. Biol. Chem.">
        <title>Members of the evolutionarily conserved PMT family of protein O-mannosyltransferases form distinct protein complexes among themselves.</title>
        <authorList>
            <person name="Girrbach V."/>
            <person name="Strahl S."/>
        </authorList>
    </citation>
    <scope>SUBUNIT</scope>
</reference>
<reference key="8">
    <citation type="journal article" date="2003" name="Nature">
        <title>Global analysis of protein expression in yeast.</title>
        <authorList>
            <person name="Ghaemmaghami S."/>
            <person name="Huh W.-K."/>
            <person name="Bower K."/>
            <person name="Howson R.W."/>
            <person name="Belle A."/>
            <person name="Dephoure N."/>
            <person name="O'Shea E.K."/>
            <person name="Weissman J.S."/>
        </authorList>
    </citation>
    <scope>LEVEL OF PROTEIN EXPRESSION [LARGE SCALE ANALYSIS]</scope>
</reference>
<reference key="9">
    <citation type="journal article" date="2004" name="Mol. Biol. Cell">
        <title>O-glycosylation as a sorting determinant for cell surface delivery in yeast.</title>
        <authorList>
            <person name="Proszynski T.J."/>
            <person name="Simons K."/>
            <person name="Bagnat M."/>
        </authorList>
    </citation>
    <scope>FUNCTION</scope>
</reference>
<reference key="10">
    <citation type="journal article" date="2004" name="Mol. Cell. Biol.">
        <title>Aberrant processing of the WSC family and Mid2p cell surface sensors results in cell death of Saccharomyces cerevisiae O-mannosylation mutants.</title>
        <authorList>
            <person name="Lommel M."/>
            <person name="Bagnat M."/>
            <person name="Strahl S."/>
        </authorList>
    </citation>
    <scope>FUNCTION</scope>
    <scope>DISRUPTION PHENOTYPE</scope>
</reference>
<reference key="11">
    <citation type="journal article" date="2006" name="Proc. Natl. Acad. Sci. U.S.A.">
        <title>A global topology map of the Saccharomyces cerevisiae membrane proteome.</title>
        <authorList>
            <person name="Kim H."/>
            <person name="Melen K."/>
            <person name="Oesterberg M."/>
            <person name="von Heijne G."/>
        </authorList>
    </citation>
    <scope>TOPOLOGY [LARGE SCALE ANALYSIS]</scope>
    <source>
        <strain>ATCC 208353 / W303-1A</strain>
    </source>
</reference>
<reference key="12">
    <citation type="journal article" date="2007" name="Proc. Natl. Acad. Sci. U.S.A.">
        <title>Membrane association is a determinant for substrate recognition by PMT4 protein O-mannosyltransferases.</title>
        <authorList>
            <person name="Hutzler J."/>
            <person name="Schmid M."/>
            <person name="Bernard T."/>
            <person name="Henrissat B."/>
            <person name="Strahl S."/>
        </authorList>
    </citation>
    <scope>FUNCTION</scope>
    <scope>CATALYTIC ACTIVITY</scope>
</reference>
<reference key="13">
    <citation type="journal article" date="2007" name="Biosci. Biotechnol. Biochem.">
        <title>Peculiar protein-protein interactions of the novel endoplasmic reticulum membrane protein Rcr1 and ubiquitin ligase Rsp5.</title>
        <authorList>
            <person name="Imai K."/>
            <person name="Noda Y."/>
            <person name="Adachi H."/>
            <person name="Yoda K."/>
        </authorList>
    </citation>
    <scope>INTERACTION WITH RCR1</scope>
</reference>
<evidence type="ECO:0000250" key="1">
    <source>
        <dbReference type="UniProtKB" id="P33775"/>
    </source>
</evidence>
<evidence type="ECO:0000255" key="2"/>
<evidence type="ECO:0000255" key="3">
    <source>
        <dbReference type="PROSITE-ProRule" id="PRU00131"/>
    </source>
</evidence>
<evidence type="ECO:0000256" key="4">
    <source>
        <dbReference type="SAM" id="MobiDB-lite"/>
    </source>
</evidence>
<evidence type="ECO:0000269" key="5">
    <source>
    </source>
</evidence>
<evidence type="ECO:0000269" key="6">
    <source>
    </source>
</evidence>
<evidence type="ECO:0000269" key="7">
    <source>
    </source>
</evidence>
<evidence type="ECO:0000269" key="8">
    <source>
    </source>
</evidence>
<evidence type="ECO:0000269" key="9">
    <source>
    </source>
</evidence>
<evidence type="ECO:0000269" key="10">
    <source>
    </source>
</evidence>
<evidence type="ECO:0000269" key="11">
    <source>
    </source>
</evidence>
<evidence type="ECO:0000303" key="12">
    <source>
    </source>
</evidence>
<evidence type="ECO:0000303" key="13">
    <source>
    </source>
</evidence>
<evidence type="ECO:0000305" key="14"/>
<evidence type="ECO:0000312" key="15">
    <source>
        <dbReference type="SGD" id="S000003904"/>
    </source>
</evidence>
<keyword id="KW-0256">Endoplasmic reticulum</keyword>
<keyword id="KW-0325">Glycoprotein</keyword>
<keyword id="KW-0328">Glycosyltransferase</keyword>
<keyword id="KW-0472">Membrane</keyword>
<keyword id="KW-1185">Reference proteome</keyword>
<keyword id="KW-0677">Repeat</keyword>
<keyword id="KW-0808">Transferase</keyword>
<keyword id="KW-0812">Transmembrane</keyword>
<keyword id="KW-1133">Transmembrane helix</keyword>
<organism>
    <name type="scientific">Saccharomyces cerevisiae (strain ATCC 204508 / S288c)</name>
    <name type="common">Baker's yeast</name>
    <dbReference type="NCBI Taxonomy" id="559292"/>
    <lineage>
        <taxon>Eukaryota</taxon>
        <taxon>Fungi</taxon>
        <taxon>Dikarya</taxon>
        <taxon>Ascomycota</taxon>
        <taxon>Saccharomycotina</taxon>
        <taxon>Saccharomycetes</taxon>
        <taxon>Saccharomycetales</taxon>
        <taxon>Saccharomycetaceae</taxon>
        <taxon>Saccharomyces</taxon>
    </lineage>
</organism>
<protein>
    <recommendedName>
        <fullName>Dolichyl-phosphate-mannose--protein mannosyltransferase 4</fullName>
        <ecNumber evidence="10">2.4.1.109</ecNumber>
    </recommendedName>
</protein>
<feature type="chain" id="PRO_0000121494" description="Dolichyl-phosphate-mannose--protein mannosyltransferase 4">
    <location>
        <begin position="1"/>
        <end position="762"/>
    </location>
</feature>
<feature type="topological domain" description="Lumenal" evidence="2">
    <location>
        <begin position="1"/>
        <end position="53"/>
    </location>
</feature>
<feature type="transmembrane region" description="Helical" evidence="2">
    <location>
        <begin position="54"/>
        <end position="74"/>
    </location>
</feature>
<feature type="topological domain" description="Cytoplasmic" evidence="2">
    <location>
        <begin position="75"/>
        <end position="136"/>
    </location>
</feature>
<feature type="transmembrane region" description="Helical" evidence="2">
    <location>
        <begin position="137"/>
        <end position="157"/>
    </location>
</feature>
<feature type="topological domain" description="Lumenal" evidence="2">
    <location>
        <begin position="158"/>
        <end position="166"/>
    </location>
</feature>
<feature type="transmembrane region" description="Helical" evidence="2">
    <location>
        <begin position="167"/>
        <end position="187"/>
    </location>
</feature>
<feature type="topological domain" description="Cytoplasmic" evidence="2">
    <location>
        <begin position="188"/>
        <end position="189"/>
    </location>
</feature>
<feature type="transmembrane region" description="Helical" evidence="2">
    <location>
        <begin position="190"/>
        <end position="210"/>
    </location>
</feature>
<feature type="topological domain" description="Lumenal" evidence="2">
    <location>
        <begin position="211"/>
        <end position="217"/>
    </location>
</feature>
<feature type="transmembrane region" description="Helical" evidence="2">
    <location>
        <begin position="218"/>
        <end position="238"/>
    </location>
</feature>
<feature type="topological domain" description="Cytoplasmic" evidence="2">
    <location>
        <begin position="239"/>
        <end position="242"/>
    </location>
</feature>
<feature type="transmembrane region" description="Helical" evidence="2">
    <location>
        <begin position="243"/>
        <end position="263"/>
    </location>
</feature>
<feature type="topological domain" description="Lumenal" evidence="2">
    <location>
        <begin position="264"/>
        <end position="283"/>
    </location>
</feature>
<feature type="transmembrane region" description="Helical" evidence="2">
    <location>
        <begin position="284"/>
        <end position="304"/>
    </location>
</feature>
<feature type="topological domain" description="Cytoplasmic" evidence="2">
    <location>
        <begin position="305"/>
        <end position="593"/>
    </location>
</feature>
<feature type="transmembrane region" description="Helical" evidence="2">
    <location>
        <begin position="594"/>
        <end position="614"/>
    </location>
</feature>
<feature type="topological domain" description="Lumenal" evidence="2">
    <location>
        <begin position="615"/>
        <end position="635"/>
    </location>
</feature>
<feature type="transmembrane region" description="Helical" evidence="2">
    <location>
        <begin position="636"/>
        <end position="656"/>
    </location>
</feature>
<feature type="topological domain" description="Cytoplasmic" evidence="2">
    <location>
        <begin position="657"/>
        <end position="716"/>
    </location>
</feature>
<feature type="transmembrane region" description="Helical" evidence="2">
    <location>
        <begin position="717"/>
        <end position="737"/>
    </location>
</feature>
<feature type="topological domain" description="Lumenal" evidence="2">
    <location>
        <begin position="738"/>
        <end position="762"/>
    </location>
</feature>
<feature type="domain" description="MIR 1" evidence="3">
    <location>
        <begin position="331"/>
        <end position="391"/>
    </location>
</feature>
<feature type="domain" description="MIR 2" evidence="3">
    <location>
        <begin position="399"/>
        <end position="458"/>
    </location>
</feature>
<feature type="domain" description="MIR 3" evidence="3">
    <location>
        <begin position="464"/>
        <end position="521"/>
    </location>
</feature>
<feature type="region of interest" description="Disordered" evidence="4">
    <location>
        <begin position="1"/>
        <end position="24"/>
    </location>
</feature>
<feature type="compositionally biased region" description="Basic residues" evidence="4">
    <location>
        <begin position="1"/>
        <end position="10"/>
    </location>
</feature>
<feature type="glycosylation site" description="N-linked (GlcNAc...) asparagine" evidence="2">
    <location>
        <position position="759"/>
    </location>
</feature>
<sequence length="762" mass="87966">MSVPKKRNHGKLPPSTKDVDDPSLKYTKAAPKCEQVAEHWLLQPLPEPESRYSFWVTIVTLLAFAARFYKIWYPKEVVFDEVHFGKFASYYLERSYFFDVHPPFAKMMIAFIGWLCGYDGSFKFDEIGYSYETHPAPYIAYRSFNAILGTLTVPIMFNTLKELNFRAITCAFASLLVAIDTAHVTETRLILLDAILIISIAATMYCYVRFYKCQLRQPFTWSWYIWLHATGLSLSFVISTKYVGVMTYSAIGFAAVVNLWQLLDIKAGLSLRQFMRHFSKRLNGLVLIPFVIYLFWFWVHFTVLNTSGPGDAFMSAEFQETLKDSPLSVDSKTVNYFDIITIKHQDTDAFLHSHLARYPQRYEDGRISSAGQQVTGYTHPDFNNQWEVLPPHGSDVGKGQAVLLNQHIRLRHVATDTYLLAHDVASPFYPTNEEITTVTLEEGDGELYPETLFAFQPLKKSDEGHVLKSKTVSFRLFHVDTSVALWTHNDELLPDWGFQQQEINGNKKVIDPSNNWVVDEIVNLDEVRKVYIPKVVKPLPFLKKWIETQKSMFEHNNKLSSEHPFASEPYSWPGSLSGVSFWTNGDEKKQIYFIGNIIGWWFQVISLAVFVGIIVADLITRHRGYYALNKMTREKLYGPLMFFFVSWCCHYFPFFLMARQKFLHHYLPAHLIACLFSGALWEVIFSDCKSLDLEKDEDISGASYERNPKVYVKPYTVFLVCVSCAVAWFFVYFSPLVYGDVSLSPSEVVSREWFDIELNFSK</sequence>